<sequence length="750" mass="83152">MIIRSPESEVKIMVDRDPIKTSFEEWARPGHFSRTIAKGPNTTTWIWNLHADAHDFDSHTSDLEEISRKVFSAHFGQLSIIFLWLSGMYFHGARFSNYEAWLSDPTHIAPSAQVVWPIVGQEILNGDVGGGFRGIQITSGFFQIWRASGITSELQLYCTAIGALVFAALMLFAGWFHYHKAAPKLAWFQDVESMLNHHLAGLLGLGSLSWAGHQVHVSLPINQFLDAGVDPKEIPLPHEFILNRDLLAQLYPSFAEGSTPFFTLNWSKYAEFLTFRGGLDPVTGGLWLTDIAHHHLAIAIIFLIAGHMYRTNWGIGHGLKEILEAHKGPFTGEGHKGLYEILTTSWHAQLALNLAMLGSLTIVVAHHMYSMPPYPYLAIDYGTQLSLFTHHMWIGGFLIVGAAAHAAIFMVRDYDPTTRYNDLLDRVLRHRDAIISHLNWACIFLGFHSFGLYIHNDTMSALGRPQDMFSDTAIQLQPIFAQWIQNTHALAPGATAPGATTSTSLTWGGGDLVAVGGKVALLPIPLGTADFLVHHIHAFTIHVTVLILLKGVLFARSSRLIPDKANLGFRFPCDGPGRGGTCQVSAWDHVFLGLFWMYNAISVVIFHFSWKMQSDVWGSISNQGVVTHITGGNFAQSSITINGWLRDFLWAQASQVIQSYGSSLSAYGLFFLGAHFVWAFSLMFLFSGRGYWQELIESIVWAHNKLKVAPATQPRALSIVQGRAVGVTHYLLGGIATTWAFFLARIIAVG</sequence>
<reference key="1">
    <citation type="journal article" date="2003" name="Mol. Biol. Evol.">
        <title>Analysis of the Amborella trichopoda chloroplast genome sequence suggests that Amborella is not a basal angiosperm.</title>
        <authorList>
            <person name="Goremykin V.V."/>
            <person name="Hirsch-Ernst K.I."/>
            <person name="Wolfl S."/>
            <person name="Hellwig F.H."/>
        </authorList>
    </citation>
    <scope>NUCLEOTIDE SEQUENCE [LARGE SCALE GENOMIC DNA]</scope>
</reference>
<reference key="2">
    <citation type="journal article" date="2002" name="Am. J. Bot.">
        <title>Relationships among seed plants inferred from highly conserved genes: sorting conflicting phylogenetic signals among ancient lineages.</title>
        <authorList>
            <person name="Magallon S."/>
            <person name="Sanderson M.J."/>
        </authorList>
    </citation>
    <scope>NUCLEOTIDE SEQUENCE OF 11-730</scope>
</reference>
<comment type="function">
    <text>PsaA and PsaB bind P700, the primary electron donor of photosystem I (PSI), as well as the electron acceptors A0, A1 and FX. PSI is a plastocyanin-ferredoxin oxidoreductase, converting photonic excitation into a charge separation, which transfers an electron from the donor P700 chlorophyll pair to the spectroscopically characterized acceptors A0, A1, FX, FA and FB in turn. Oxidized P700 is reduced on the lumenal side of the thylakoid membrane by plastocyanin.</text>
</comment>
<comment type="catalytic activity">
    <reaction evidence="1">
        <text>reduced [plastocyanin] + hnu + oxidized [2Fe-2S]-[ferredoxin] = oxidized [plastocyanin] + reduced [2Fe-2S]-[ferredoxin]</text>
        <dbReference type="Rhea" id="RHEA:30407"/>
        <dbReference type="Rhea" id="RHEA-COMP:10000"/>
        <dbReference type="Rhea" id="RHEA-COMP:10001"/>
        <dbReference type="Rhea" id="RHEA-COMP:10039"/>
        <dbReference type="Rhea" id="RHEA-COMP:10040"/>
        <dbReference type="ChEBI" id="CHEBI:29036"/>
        <dbReference type="ChEBI" id="CHEBI:30212"/>
        <dbReference type="ChEBI" id="CHEBI:33737"/>
        <dbReference type="ChEBI" id="CHEBI:33738"/>
        <dbReference type="ChEBI" id="CHEBI:49552"/>
        <dbReference type="EC" id="1.97.1.12"/>
    </reaction>
</comment>
<comment type="cofactor">
    <text evidence="1">P700 is a chlorophyll a/chlorophyll a' dimer, A0 is one or more chlorophyll a, A1 is one or both phylloquinones and FX is a shared 4Fe-4S iron-sulfur center.</text>
</comment>
<comment type="subunit">
    <text evidence="1">The PsaA/B heterodimer binds the P700 chlorophyll special pair and subsequent electron acceptors. PSI consists of a core antenna complex that captures photons, and an electron transfer chain that converts photonic excitation into a charge separation. The eukaryotic PSI reaction center is composed of at least 11 subunits.</text>
</comment>
<comment type="subcellular location">
    <subcellularLocation>
        <location evidence="1">Plastid</location>
        <location evidence="1">Chloroplast thylakoid membrane</location>
        <topology evidence="1">Multi-pass membrane protein</topology>
    </subcellularLocation>
</comment>
<comment type="similarity">
    <text evidence="1">Belongs to the PsaA/PsaB family.</text>
</comment>
<accession>Q70Y03</accession>
<accession>Q8MC64</accession>
<organism>
    <name type="scientific">Amborella trichopoda</name>
    <dbReference type="NCBI Taxonomy" id="13333"/>
    <lineage>
        <taxon>Eukaryota</taxon>
        <taxon>Viridiplantae</taxon>
        <taxon>Streptophyta</taxon>
        <taxon>Embryophyta</taxon>
        <taxon>Tracheophyta</taxon>
        <taxon>Spermatophyta</taxon>
        <taxon>Magnoliopsida</taxon>
        <taxon>Amborellales</taxon>
        <taxon>Amborellaceae</taxon>
        <taxon>Amborella</taxon>
    </lineage>
</organism>
<keyword id="KW-0004">4Fe-4S</keyword>
<keyword id="KW-0148">Chlorophyll</keyword>
<keyword id="KW-0150">Chloroplast</keyword>
<keyword id="KW-0157">Chromophore</keyword>
<keyword id="KW-0249">Electron transport</keyword>
<keyword id="KW-0408">Iron</keyword>
<keyword id="KW-0411">Iron-sulfur</keyword>
<keyword id="KW-0460">Magnesium</keyword>
<keyword id="KW-0472">Membrane</keyword>
<keyword id="KW-0479">Metal-binding</keyword>
<keyword id="KW-0560">Oxidoreductase</keyword>
<keyword id="KW-0602">Photosynthesis</keyword>
<keyword id="KW-0603">Photosystem I</keyword>
<keyword id="KW-0934">Plastid</keyword>
<keyword id="KW-1185">Reference proteome</keyword>
<keyword id="KW-0793">Thylakoid</keyword>
<keyword id="KW-0812">Transmembrane</keyword>
<keyword id="KW-1133">Transmembrane helix</keyword>
<keyword id="KW-0813">Transport</keyword>
<geneLocation type="chloroplast"/>
<feature type="chain" id="PRO_0000088528" description="Photosystem I P700 chlorophyll a apoprotein A1">
    <location>
        <begin position="1"/>
        <end position="750"/>
    </location>
</feature>
<feature type="transmembrane region" description="Helical; Name=I" evidence="1">
    <location>
        <begin position="70"/>
        <end position="93"/>
    </location>
</feature>
<feature type="transmembrane region" description="Helical; Name=II" evidence="1">
    <location>
        <begin position="156"/>
        <end position="179"/>
    </location>
</feature>
<feature type="transmembrane region" description="Helical; Name=III" evidence="1">
    <location>
        <begin position="195"/>
        <end position="219"/>
    </location>
</feature>
<feature type="transmembrane region" description="Helical; Name=IV" evidence="1">
    <location>
        <begin position="291"/>
        <end position="309"/>
    </location>
</feature>
<feature type="transmembrane region" description="Helical; Name=V" evidence="1">
    <location>
        <begin position="346"/>
        <end position="369"/>
    </location>
</feature>
<feature type="transmembrane region" description="Helical; Name=VI" evidence="1">
    <location>
        <begin position="385"/>
        <end position="411"/>
    </location>
</feature>
<feature type="transmembrane region" description="Helical; Name=VII" evidence="1">
    <location>
        <begin position="433"/>
        <end position="455"/>
    </location>
</feature>
<feature type="transmembrane region" description="Helical; Name=VIII" evidence="1">
    <location>
        <begin position="531"/>
        <end position="549"/>
    </location>
</feature>
<feature type="transmembrane region" description="Helical; Name=IX" evidence="1">
    <location>
        <begin position="589"/>
        <end position="610"/>
    </location>
</feature>
<feature type="transmembrane region" description="Helical; Name=X" evidence="1">
    <location>
        <begin position="664"/>
        <end position="686"/>
    </location>
</feature>
<feature type="transmembrane region" description="Helical; Name=XI" evidence="1">
    <location>
        <begin position="724"/>
        <end position="744"/>
    </location>
</feature>
<feature type="binding site" evidence="1">
    <location>
        <position position="573"/>
    </location>
    <ligand>
        <name>[4Fe-4S] cluster</name>
        <dbReference type="ChEBI" id="CHEBI:49883"/>
        <note>ligand shared between dimeric partners</note>
    </ligand>
</feature>
<feature type="binding site" evidence="1">
    <location>
        <position position="582"/>
    </location>
    <ligand>
        <name>[4Fe-4S] cluster</name>
        <dbReference type="ChEBI" id="CHEBI:49883"/>
        <note>ligand shared between dimeric partners</note>
    </ligand>
</feature>
<feature type="binding site" description="axial binding residue" evidence="1">
    <location>
        <position position="675"/>
    </location>
    <ligand>
        <name>chlorophyll a'</name>
        <dbReference type="ChEBI" id="CHEBI:189419"/>
        <label>A1</label>
    </ligand>
    <ligandPart>
        <name>Mg</name>
        <dbReference type="ChEBI" id="CHEBI:25107"/>
    </ligandPart>
</feature>
<feature type="binding site" description="axial binding residue" evidence="1">
    <location>
        <position position="683"/>
    </location>
    <ligand>
        <name>chlorophyll a</name>
        <dbReference type="ChEBI" id="CHEBI:58416"/>
        <label>A3</label>
    </ligand>
    <ligandPart>
        <name>Mg</name>
        <dbReference type="ChEBI" id="CHEBI:25107"/>
    </ligandPart>
</feature>
<feature type="binding site" evidence="1">
    <location>
        <position position="691"/>
    </location>
    <ligand>
        <name>chlorophyll a</name>
        <dbReference type="ChEBI" id="CHEBI:58416"/>
        <label>A3</label>
    </ligand>
</feature>
<feature type="binding site" evidence="1">
    <location>
        <position position="692"/>
    </location>
    <ligand>
        <name>phylloquinone</name>
        <dbReference type="ChEBI" id="CHEBI:18067"/>
        <label>A</label>
    </ligand>
</feature>
<name>PSAA_AMBTC</name>
<proteinExistence type="evidence at transcript level"/>
<evidence type="ECO:0000255" key="1">
    <source>
        <dbReference type="HAMAP-Rule" id="MF_00458"/>
    </source>
</evidence>
<gene>
    <name evidence="1" type="primary">psaA</name>
</gene>
<dbReference type="EC" id="1.97.1.12" evidence="1"/>
<dbReference type="EMBL" id="AJ506156">
    <property type="protein sequence ID" value="CAD45107.1"/>
    <property type="molecule type" value="Genomic_DNA"/>
</dbReference>
<dbReference type="EMBL" id="AJ344262">
    <property type="protein sequence ID" value="CAC87904.1"/>
    <property type="molecule type" value="mRNA"/>
</dbReference>
<dbReference type="RefSeq" id="NP_904099.1">
    <property type="nucleotide sequence ID" value="NC_005086.1"/>
</dbReference>
<dbReference type="SMR" id="Q70Y03"/>
<dbReference type="STRING" id="13333.Q70Y03"/>
<dbReference type="GeneID" id="2546488"/>
<dbReference type="KEGG" id="atr:2546488"/>
<dbReference type="eggNOG" id="ENOG502QRYE">
    <property type="taxonomic scope" value="Eukaryota"/>
</dbReference>
<dbReference type="OrthoDB" id="349at2759"/>
<dbReference type="Proteomes" id="UP000017836">
    <property type="component" value="Chloroplast"/>
</dbReference>
<dbReference type="GO" id="GO:0009535">
    <property type="term" value="C:chloroplast thylakoid membrane"/>
    <property type="evidence" value="ECO:0007669"/>
    <property type="project" value="UniProtKB-SubCell"/>
</dbReference>
<dbReference type="GO" id="GO:0009522">
    <property type="term" value="C:photosystem I"/>
    <property type="evidence" value="ECO:0007669"/>
    <property type="project" value="UniProtKB-KW"/>
</dbReference>
<dbReference type="GO" id="GO:0051539">
    <property type="term" value="F:4 iron, 4 sulfur cluster binding"/>
    <property type="evidence" value="ECO:0007669"/>
    <property type="project" value="UniProtKB-KW"/>
</dbReference>
<dbReference type="GO" id="GO:0016168">
    <property type="term" value="F:chlorophyll binding"/>
    <property type="evidence" value="ECO:0007669"/>
    <property type="project" value="UniProtKB-KW"/>
</dbReference>
<dbReference type="GO" id="GO:0009055">
    <property type="term" value="F:electron transfer activity"/>
    <property type="evidence" value="ECO:0007669"/>
    <property type="project" value="UniProtKB-UniRule"/>
</dbReference>
<dbReference type="GO" id="GO:0000287">
    <property type="term" value="F:magnesium ion binding"/>
    <property type="evidence" value="ECO:0007669"/>
    <property type="project" value="UniProtKB-UniRule"/>
</dbReference>
<dbReference type="GO" id="GO:0016491">
    <property type="term" value="F:oxidoreductase activity"/>
    <property type="evidence" value="ECO:0007669"/>
    <property type="project" value="UniProtKB-KW"/>
</dbReference>
<dbReference type="GO" id="GO:0015979">
    <property type="term" value="P:photosynthesis"/>
    <property type="evidence" value="ECO:0007669"/>
    <property type="project" value="UniProtKB-UniRule"/>
</dbReference>
<dbReference type="FunFam" id="1.20.1130.10:FF:000001">
    <property type="entry name" value="Photosystem I P700 chlorophyll a apoprotein A2"/>
    <property type="match status" value="1"/>
</dbReference>
<dbReference type="Gene3D" id="1.20.1130.10">
    <property type="entry name" value="Photosystem I PsaA/PsaB"/>
    <property type="match status" value="1"/>
</dbReference>
<dbReference type="HAMAP" id="MF_00458">
    <property type="entry name" value="PSI_PsaA"/>
    <property type="match status" value="1"/>
</dbReference>
<dbReference type="InterPro" id="IPR006243">
    <property type="entry name" value="PSI_PsaA"/>
</dbReference>
<dbReference type="InterPro" id="IPR001280">
    <property type="entry name" value="PSI_PsaA/B"/>
</dbReference>
<dbReference type="InterPro" id="IPR020586">
    <property type="entry name" value="PSI_PsaA/B_CS"/>
</dbReference>
<dbReference type="InterPro" id="IPR036408">
    <property type="entry name" value="PSI_PsaA/B_sf"/>
</dbReference>
<dbReference type="NCBIfam" id="TIGR01335">
    <property type="entry name" value="psaA"/>
    <property type="match status" value="1"/>
</dbReference>
<dbReference type="PANTHER" id="PTHR30128">
    <property type="entry name" value="OUTER MEMBRANE PROTEIN, OMPA-RELATED"/>
    <property type="match status" value="1"/>
</dbReference>
<dbReference type="PANTHER" id="PTHR30128:SF19">
    <property type="entry name" value="PHOTOSYSTEM I P700 CHLOROPHYLL A APOPROTEIN A1-RELATED"/>
    <property type="match status" value="1"/>
</dbReference>
<dbReference type="Pfam" id="PF00223">
    <property type="entry name" value="PsaA_PsaB"/>
    <property type="match status" value="1"/>
</dbReference>
<dbReference type="PIRSF" id="PIRSF002905">
    <property type="entry name" value="PSI_A"/>
    <property type="match status" value="1"/>
</dbReference>
<dbReference type="PRINTS" id="PR00257">
    <property type="entry name" value="PHOTSYSPSAAB"/>
</dbReference>
<dbReference type="SUPFAM" id="SSF81558">
    <property type="entry name" value="Photosystem I subunits PsaA/PsaB"/>
    <property type="match status" value="1"/>
</dbReference>
<dbReference type="PROSITE" id="PS00419">
    <property type="entry name" value="PHOTOSYSTEM_I_PSAAB"/>
    <property type="match status" value="1"/>
</dbReference>
<protein>
    <recommendedName>
        <fullName evidence="1">Photosystem I P700 chlorophyll a apoprotein A1</fullName>
        <ecNumber evidence="1">1.97.1.12</ecNumber>
    </recommendedName>
    <alternativeName>
        <fullName evidence="1">PSI-A</fullName>
    </alternativeName>
    <alternativeName>
        <fullName evidence="1">PsaA</fullName>
    </alternativeName>
</protein>